<feature type="chain" id="PRO_0000180049" description="GTPase Era">
    <location>
        <begin position="1"/>
        <end position="299"/>
    </location>
</feature>
<feature type="domain" description="Era-type G" evidence="2">
    <location>
        <begin position="5"/>
        <end position="172"/>
    </location>
</feature>
<feature type="domain" description="KH type-2" evidence="1">
    <location>
        <begin position="203"/>
        <end position="280"/>
    </location>
</feature>
<feature type="region of interest" description="G1" evidence="2">
    <location>
        <begin position="13"/>
        <end position="20"/>
    </location>
</feature>
<feature type="region of interest" description="G2" evidence="2">
    <location>
        <begin position="39"/>
        <end position="43"/>
    </location>
</feature>
<feature type="region of interest" description="G3" evidence="2">
    <location>
        <begin position="60"/>
        <end position="63"/>
    </location>
</feature>
<feature type="region of interest" description="G4" evidence="2">
    <location>
        <begin position="122"/>
        <end position="125"/>
    </location>
</feature>
<feature type="region of interest" description="G5" evidence="2">
    <location>
        <begin position="151"/>
        <end position="153"/>
    </location>
</feature>
<feature type="binding site" evidence="1">
    <location>
        <begin position="13"/>
        <end position="20"/>
    </location>
    <ligand>
        <name>GTP</name>
        <dbReference type="ChEBI" id="CHEBI:37565"/>
    </ligand>
</feature>
<feature type="binding site" evidence="1">
    <location>
        <begin position="60"/>
        <end position="64"/>
    </location>
    <ligand>
        <name>GTP</name>
        <dbReference type="ChEBI" id="CHEBI:37565"/>
    </ligand>
</feature>
<feature type="binding site" evidence="1">
    <location>
        <begin position="122"/>
        <end position="125"/>
    </location>
    <ligand>
        <name>GTP</name>
        <dbReference type="ChEBI" id="CHEBI:37565"/>
    </ligand>
</feature>
<protein>
    <recommendedName>
        <fullName evidence="1">GTPase Era</fullName>
    </recommendedName>
</protein>
<sequence length="299" mass="34329">MTEHKSGFVSIIGRPNVGKSTFVNRVIGHKIAIMSDKAQTTRNKIQGVMTRDDAQIIFIDTPGIHKPKHKLGDYMMKVAKNTLSEIDAIMFMVNANEEIGRGDEYIIEMLKNVKTPVFLVLNKIDLVHPDELMPKIEEYQSYMDFTEIVPISALEGLNVDHFIDVLKTYLPEGPKYYPDDQISDHPEQFVVGEIIREKILHLTSEEIPHAIGVNVDRMVKESEDRVHIEATIYVERDSQKGIVIGKGGKKLKEVGKRARRDIEMLLGSKVYLELWVKVQRDWRNKVNFIRQIGYVEDQD</sequence>
<proteinExistence type="inferred from homology"/>
<accession>Q6GGD3</accession>
<comment type="function">
    <text evidence="1">An essential GTPase that binds both GDP and GTP, with rapid nucleotide exchange. Plays a role in 16S rRNA processing and 30S ribosomal subunit biogenesis and possibly also in cell cycle regulation and energy metabolism.</text>
</comment>
<comment type="subunit">
    <text evidence="1">Monomer.</text>
</comment>
<comment type="subcellular location">
    <subcellularLocation>
        <location>Cytoplasm</location>
    </subcellularLocation>
    <subcellularLocation>
        <location evidence="1">Cell membrane</location>
        <topology evidence="1">Peripheral membrane protein</topology>
    </subcellularLocation>
</comment>
<comment type="similarity">
    <text evidence="1 2">Belongs to the TRAFAC class TrmE-Era-EngA-EngB-Septin-like GTPase superfamily. Era GTPase family.</text>
</comment>
<reference key="1">
    <citation type="journal article" date="2004" name="Proc. Natl. Acad. Sci. U.S.A.">
        <title>Complete genomes of two clinical Staphylococcus aureus strains: evidence for the rapid evolution of virulence and drug resistance.</title>
        <authorList>
            <person name="Holden M.T.G."/>
            <person name="Feil E.J."/>
            <person name="Lindsay J.A."/>
            <person name="Peacock S.J."/>
            <person name="Day N.P.J."/>
            <person name="Enright M.C."/>
            <person name="Foster T.J."/>
            <person name="Moore C.E."/>
            <person name="Hurst L."/>
            <person name="Atkin R."/>
            <person name="Barron A."/>
            <person name="Bason N."/>
            <person name="Bentley S.D."/>
            <person name="Chillingworth C."/>
            <person name="Chillingworth T."/>
            <person name="Churcher C."/>
            <person name="Clark L."/>
            <person name="Corton C."/>
            <person name="Cronin A."/>
            <person name="Doggett J."/>
            <person name="Dowd L."/>
            <person name="Feltwell T."/>
            <person name="Hance Z."/>
            <person name="Harris B."/>
            <person name="Hauser H."/>
            <person name="Holroyd S."/>
            <person name="Jagels K."/>
            <person name="James K.D."/>
            <person name="Lennard N."/>
            <person name="Line A."/>
            <person name="Mayes R."/>
            <person name="Moule S."/>
            <person name="Mungall K."/>
            <person name="Ormond D."/>
            <person name="Quail M.A."/>
            <person name="Rabbinowitsch E."/>
            <person name="Rutherford K.M."/>
            <person name="Sanders M."/>
            <person name="Sharp S."/>
            <person name="Simmonds M."/>
            <person name="Stevens K."/>
            <person name="Whitehead S."/>
            <person name="Barrell B.G."/>
            <person name="Spratt B.G."/>
            <person name="Parkhill J."/>
        </authorList>
    </citation>
    <scope>NUCLEOTIDE SEQUENCE [LARGE SCALE GENOMIC DNA]</scope>
    <source>
        <strain>MRSA252</strain>
    </source>
</reference>
<name>ERA_STAAR</name>
<organism>
    <name type="scientific">Staphylococcus aureus (strain MRSA252)</name>
    <dbReference type="NCBI Taxonomy" id="282458"/>
    <lineage>
        <taxon>Bacteria</taxon>
        <taxon>Bacillati</taxon>
        <taxon>Bacillota</taxon>
        <taxon>Bacilli</taxon>
        <taxon>Bacillales</taxon>
        <taxon>Staphylococcaceae</taxon>
        <taxon>Staphylococcus</taxon>
    </lineage>
</organism>
<gene>
    <name evidence="1" type="primary">era</name>
    <name type="ordered locus">SAR1644</name>
</gene>
<keyword id="KW-1003">Cell membrane</keyword>
<keyword id="KW-0963">Cytoplasm</keyword>
<keyword id="KW-0342">GTP-binding</keyword>
<keyword id="KW-0472">Membrane</keyword>
<keyword id="KW-0547">Nucleotide-binding</keyword>
<keyword id="KW-0690">Ribosome biogenesis</keyword>
<keyword id="KW-0694">RNA-binding</keyword>
<keyword id="KW-0699">rRNA-binding</keyword>
<dbReference type="EMBL" id="BX571856">
    <property type="protein sequence ID" value="CAG40639.1"/>
    <property type="molecule type" value="Genomic_DNA"/>
</dbReference>
<dbReference type="RefSeq" id="WP_000134765.1">
    <property type="nucleotide sequence ID" value="NC_002952.2"/>
</dbReference>
<dbReference type="SMR" id="Q6GGD3"/>
<dbReference type="KEGG" id="sar:SAR1644"/>
<dbReference type="HOGENOM" id="CLU_038009_1_0_9"/>
<dbReference type="Proteomes" id="UP000000596">
    <property type="component" value="Chromosome"/>
</dbReference>
<dbReference type="GO" id="GO:0005829">
    <property type="term" value="C:cytosol"/>
    <property type="evidence" value="ECO:0007669"/>
    <property type="project" value="TreeGrafter"/>
</dbReference>
<dbReference type="GO" id="GO:0005886">
    <property type="term" value="C:plasma membrane"/>
    <property type="evidence" value="ECO:0007669"/>
    <property type="project" value="UniProtKB-SubCell"/>
</dbReference>
<dbReference type="GO" id="GO:0005525">
    <property type="term" value="F:GTP binding"/>
    <property type="evidence" value="ECO:0007669"/>
    <property type="project" value="UniProtKB-UniRule"/>
</dbReference>
<dbReference type="GO" id="GO:0003924">
    <property type="term" value="F:GTPase activity"/>
    <property type="evidence" value="ECO:0007669"/>
    <property type="project" value="UniProtKB-UniRule"/>
</dbReference>
<dbReference type="GO" id="GO:0043024">
    <property type="term" value="F:ribosomal small subunit binding"/>
    <property type="evidence" value="ECO:0007669"/>
    <property type="project" value="TreeGrafter"/>
</dbReference>
<dbReference type="GO" id="GO:0070181">
    <property type="term" value="F:small ribosomal subunit rRNA binding"/>
    <property type="evidence" value="ECO:0007669"/>
    <property type="project" value="UniProtKB-UniRule"/>
</dbReference>
<dbReference type="GO" id="GO:0000028">
    <property type="term" value="P:ribosomal small subunit assembly"/>
    <property type="evidence" value="ECO:0007669"/>
    <property type="project" value="TreeGrafter"/>
</dbReference>
<dbReference type="CDD" id="cd04163">
    <property type="entry name" value="Era"/>
    <property type="match status" value="1"/>
</dbReference>
<dbReference type="CDD" id="cd22534">
    <property type="entry name" value="KH-II_Era"/>
    <property type="match status" value="1"/>
</dbReference>
<dbReference type="FunFam" id="3.30.300.20:FF:000003">
    <property type="entry name" value="GTPase Era"/>
    <property type="match status" value="1"/>
</dbReference>
<dbReference type="FunFam" id="3.40.50.300:FF:000094">
    <property type="entry name" value="GTPase Era"/>
    <property type="match status" value="1"/>
</dbReference>
<dbReference type="Gene3D" id="3.30.300.20">
    <property type="match status" value="1"/>
</dbReference>
<dbReference type="Gene3D" id="3.40.50.300">
    <property type="entry name" value="P-loop containing nucleotide triphosphate hydrolases"/>
    <property type="match status" value="1"/>
</dbReference>
<dbReference type="HAMAP" id="MF_00367">
    <property type="entry name" value="GTPase_Era"/>
    <property type="match status" value="1"/>
</dbReference>
<dbReference type="InterPro" id="IPR030388">
    <property type="entry name" value="G_ERA_dom"/>
</dbReference>
<dbReference type="InterPro" id="IPR006073">
    <property type="entry name" value="GTP-bd"/>
</dbReference>
<dbReference type="InterPro" id="IPR005662">
    <property type="entry name" value="GTPase_Era-like"/>
</dbReference>
<dbReference type="InterPro" id="IPR015946">
    <property type="entry name" value="KH_dom-like_a/b"/>
</dbReference>
<dbReference type="InterPro" id="IPR004044">
    <property type="entry name" value="KH_dom_type_2"/>
</dbReference>
<dbReference type="InterPro" id="IPR009019">
    <property type="entry name" value="KH_sf_prok-type"/>
</dbReference>
<dbReference type="InterPro" id="IPR027417">
    <property type="entry name" value="P-loop_NTPase"/>
</dbReference>
<dbReference type="InterPro" id="IPR005225">
    <property type="entry name" value="Small_GTP-bd"/>
</dbReference>
<dbReference type="NCBIfam" id="TIGR00436">
    <property type="entry name" value="era"/>
    <property type="match status" value="1"/>
</dbReference>
<dbReference type="NCBIfam" id="NF000908">
    <property type="entry name" value="PRK00089.1"/>
    <property type="match status" value="1"/>
</dbReference>
<dbReference type="NCBIfam" id="TIGR00231">
    <property type="entry name" value="small_GTP"/>
    <property type="match status" value="1"/>
</dbReference>
<dbReference type="PANTHER" id="PTHR42698">
    <property type="entry name" value="GTPASE ERA"/>
    <property type="match status" value="1"/>
</dbReference>
<dbReference type="PANTHER" id="PTHR42698:SF1">
    <property type="entry name" value="GTPASE ERA, MITOCHONDRIAL"/>
    <property type="match status" value="1"/>
</dbReference>
<dbReference type="Pfam" id="PF07650">
    <property type="entry name" value="KH_2"/>
    <property type="match status" value="1"/>
</dbReference>
<dbReference type="Pfam" id="PF01926">
    <property type="entry name" value="MMR_HSR1"/>
    <property type="match status" value="1"/>
</dbReference>
<dbReference type="SUPFAM" id="SSF52540">
    <property type="entry name" value="P-loop containing nucleoside triphosphate hydrolases"/>
    <property type="match status" value="1"/>
</dbReference>
<dbReference type="SUPFAM" id="SSF54814">
    <property type="entry name" value="Prokaryotic type KH domain (KH-domain type II)"/>
    <property type="match status" value="1"/>
</dbReference>
<dbReference type="PROSITE" id="PS51713">
    <property type="entry name" value="G_ERA"/>
    <property type="match status" value="1"/>
</dbReference>
<dbReference type="PROSITE" id="PS50823">
    <property type="entry name" value="KH_TYPE_2"/>
    <property type="match status" value="1"/>
</dbReference>
<evidence type="ECO:0000255" key="1">
    <source>
        <dbReference type="HAMAP-Rule" id="MF_00367"/>
    </source>
</evidence>
<evidence type="ECO:0000255" key="2">
    <source>
        <dbReference type="PROSITE-ProRule" id="PRU01050"/>
    </source>
</evidence>